<evidence type="ECO:0000255" key="1">
    <source>
        <dbReference type="HAMAP-Rule" id="MF_01425"/>
    </source>
</evidence>
<proteinExistence type="inferred from homology"/>
<accession>B5XZ41</accession>
<name>FIEF_KLEP3</name>
<dbReference type="EMBL" id="CP000964">
    <property type="protein sequence ID" value="ACI10079.1"/>
    <property type="molecule type" value="Genomic_DNA"/>
</dbReference>
<dbReference type="SMR" id="B5XZ41"/>
<dbReference type="KEGG" id="kpe:KPK_5457"/>
<dbReference type="HOGENOM" id="CLU_013430_3_0_6"/>
<dbReference type="Proteomes" id="UP000001734">
    <property type="component" value="Chromosome"/>
</dbReference>
<dbReference type="GO" id="GO:0005886">
    <property type="term" value="C:plasma membrane"/>
    <property type="evidence" value="ECO:0007669"/>
    <property type="project" value="UniProtKB-SubCell"/>
</dbReference>
<dbReference type="GO" id="GO:0015086">
    <property type="term" value="F:cadmium ion transmembrane transporter activity"/>
    <property type="evidence" value="ECO:0007669"/>
    <property type="project" value="UniProtKB-UniRule"/>
</dbReference>
<dbReference type="GO" id="GO:0015093">
    <property type="term" value="F:ferrous iron transmembrane transporter activity"/>
    <property type="evidence" value="ECO:0007669"/>
    <property type="project" value="TreeGrafter"/>
</dbReference>
<dbReference type="GO" id="GO:0046872">
    <property type="term" value="F:metal ion binding"/>
    <property type="evidence" value="ECO:0007669"/>
    <property type="project" value="UniProtKB-KW"/>
</dbReference>
<dbReference type="GO" id="GO:0015341">
    <property type="term" value="F:zinc efflux antiporter activity"/>
    <property type="evidence" value="ECO:0007669"/>
    <property type="project" value="TreeGrafter"/>
</dbReference>
<dbReference type="GO" id="GO:0006882">
    <property type="term" value="P:intracellular zinc ion homeostasis"/>
    <property type="evidence" value="ECO:0007669"/>
    <property type="project" value="TreeGrafter"/>
</dbReference>
<dbReference type="FunFam" id="1.20.1510.10:FF:000001">
    <property type="entry name" value="Ferrous-iron efflux pump FieF"/>
    <property type="match status" value="1"/>
</dbReference>
<dbReference type="FunFam" id="3.30.70.1350:FF:000002">
    <property type="entry name" value="Ferrous-iron efflux pump FieF"/>
    <property type="match status" value="1"/>
</dbReference>
<dbReference type="Gene3D" id="1.20.1510.10">
    <property type="entry name" value="Cation efflux protein transmembrane domain"/>
    <property type="match status" value="1"/>
</dbReference>
<dbReference type="Gene3D" id="3.30.70.1350">
    <property type="entry name" value="Cation efflux protein, cytoplasmic domain"/>
    <property type="match status" value="1"/>
</dbReference>
<dbReference type="HAMAP" id="MF_01425">
    <property type="entry name" value="Cation_efflux_FieF"/>
    <property type="match status" value="1"/>
</dbReference>
<dbReference type="InterPro" id="IPR002524">
    <property type="entry name" value="Cation_efflux"/>
</dbReference>
<dbReference type="InterPro" id="IPR027470">
    <property type="entry name" value="Cation_efflux_CTD"/>
</dbReference>
<dbReference type="InterPro" id="IPR036837">
    <property type="entry name" value="Cation_efflux_CTD_sf"/>
</dbReference>
<dbReference type="InterPro" id="IPR023783">
    <property type="entry name" value="Cation_efflux_FieF"/>
</dbReference>
<dbReference type="InterPro" id="IPR027469">
    <property type="entry name" value="Cation_efflux_TMD_sf"/>
</dbReference>
<dbReference type="InterPro" id="IPR050291">
    <property type="entry name" value="CDF_Transporter"/>
</dbReference>
<dbReference type="NCBIfam" id="TIGR01297">
    <property type="entry name" value="CDF"/>
    <property type="match status" value="1"/>
</dbReference>
<dbReference type="NCBIfam" id="NF007064">
    <property type="entry name" value="PRK09509.1"/>
    <property type="match status" value="1"/>
</dbReference>
<dbReference type="PANTHER" id="PTHR43840:SF41">
    <property type="entry name" value="CATION-EFFLUX PUMP FIEF"/>
    <property type="match status" value="1"/>
</dbReference>
<dbReference type="PANTHER" id="PTHR43840">
    <property type="entry name" value="MITOCHONDRIAL METAL TRANSPORTER 1-RELATED"/>
    <property type="match status" value="1"/>
</dbReference>
<dbReference type="Pfam" id="PF01545">
    <property type="entry name" value="Cation_efflux"/>
    <property type="match status" value="1"/>
</dbReference>
<dbReference type="Pfam" id="PF16916">
    <property type="entry name" value="ZT_dimer"/>
    <property type="match status" value="1"/>
</dbReference>
<dbReference type="SUPFAM" id="SSF160240">
    <property type="entry name" value="Cation efflux protein cytoplasmic domain-like"/>
    <property type="match status" value="1"/>
</dbReference>
<dbReference type="SUPFAM" id="SSF161111">
    <property type="entry name" value="Cation efflux protein transmembrane domain-like"/>
    <property type="match status" value="1"/>
</dbReference>
<reference key="1">
    <citation type="journal article" date="2008" name="PLoS Genet.">
        <title>Complete genome sequence of the N2-fixing broad host range endophyte Klebsiella pneumoniae 342 and virulence predictions verified in mice.</title>
        <authorList>
            <person name="Fouts D.E."/>
            <person name="Tyler H.L."/>
            <person name="DeBoy R.T."/>
            <person name="Daugherty S."/>
            <person name="Ren Q."/>
            <person name="Badger J.H."/>
            <person name="Durkin A.S."/>
            <person name="Huot H."/>
            <person name="Shrivastava S."/>
            <person name="Kothari S."/>
            <person name="Dodson R.J."/>
            <person name="Mohamoud Y."/>
            <person name="Khouri H."/>
            <person name="Roesch L.F.W."/>
            <person name="Krogfelt K.A."/>
            <person name="Struve C."/>
            <person name="Triplett E.W."/>
            <person name="Methe B.A."/>
        </authorList>
    </citation>
    <scope>NUCLEOTIDE SEQUENCE [LARGE SCALE GENOMIC DNA]</scope>
    <source>
        <strain>342</strain>
    </source>
</reference>
<protein>
    <recommendedName>
        <fullName evidence="1">Cation-efflux pump FieF</fullName>
    </recommendedName>
</protein>
<comment type="function">
    <text evidence="1">Divalent metal cation transporter which exports Zn(2+), Cd(2+) and possibly Fe(2+). May be involved in zinc and iron detoxification by efflux.</text>
</comment>
<comment type="catalytic activity">
    <reaction evidence="1">
        <text>Zn(2+)(in) + H(+)(out) = Zn(2+)(out) + H(+)(in)</text>
        <dbReference type="Rhea" id="RHEA:28839"/>
        <dbReference type="ChEBI" id="CHEBI:15378"/>
        <dbReference type="ChEBI" id="CHEBI:29105"/>
    </reaction>
</comment>
<comment type="catalytic activity">
    <reaction evidence="1">
        <text>Cd(2+)(in) + H(+)(out) = Cd(2+)(out) + H(+)(in)</text>
        <dbReference type="Rhea" id="RHEA:28739"/>
        <dbReference type="ChEBI" id="CHEBI:15378"/>
        <dbReference type="ChEBI" id="CHEBI:48775"/>
    </reaction>
</comment>
<comment type="catalytic activity">
    <reaction evidence="1">
        <text>Fe(2+)(in) + H(+)(out) = Fe(2+)(out) + H(+)(in)</text>
        <dbReference type="Rhea" id="RHEA:29439"/>
        <dbReference type="ChEBI" id="CHEBI:15378"/>
        <dbReference type="ChEBI" id="CHEBI:29033"/>
    </reaction>
</comment>
<comment type="subunit">
    <text evidence="1">Homodimer.</text>
</comment>
<comment type="subcellular location">
    <subcellularLocation>
        <location evidence="1">Cell inner membrane</location>
        <topology evidence="1">Multi-pass membrane protein</topology>
    </subcellularLocation>
</comment>
<comment type="similarity">
    <text evidence="1">Belongs to the cation diffusion facilitator (CDF) transporter (TC 2.A.4) family. FieF subfamily.</text>
</comment>
<gene>
    <name evidence="1" type="primary">fieF</name>
    <name type="ordered locus">KPK_5457</name>
</gene>
<keyword id="KW-0997">Cell inner membrane</keyword>
<keyword id="KW-1003">Cell membrane</keyword>
<keyword id="KW-0406">Ion transport</keyword>
<keyword id="KW-0408">Iron</keyword>
<keyword id="KW-0410">Iron transport</keyword>
<keyword id="KW-0472">Membrane</keyword>
<keyword id="KW-0479">Metal-binding</keyword>
<keyword id="KW-0812">Transmembrane</keyword>
<keyword id="KW-1133">Transmembrane helix</keyword>
<keyword id="KW-0813">Transport</keyword>
<keyword id="KW-0862">Zinc</keyword>
<keyword id="KW-0864">Zinc transport</keyword>
<organism>
    <name type="scientific">Klebsiella pneumoniae (strain 342)</name>
    <dbReference type="NCBI Taxonomy" id="507522"/>
    <lineage>
        <taxon>Bacteria</taxon>
        <taxon>Pseudomonadati</taxon>
        <taxon>Pseudomonadota</taxon>
        <taxon>Gammaproteobacteria</taxon>
        <taxon>Enterobacterales</taxon>
        <taxon>Enterobacteriaceae</taxon>
        <taxon>Klebsiella/Raoultella group</taxon>
        <taxon>Klebsiella</taxon>
        <taxon>Klebsiella pneumoniae complex</taxon>
    </lineage>
</organism>
<feature type="chain" id="PRO_1000145698" description="Cation-efflux pump FieF">
    <location>
        <begin position="1"/>
        <end position="300"/>
    </location>
</feature>
<feature type="transmembrane region" description="Helical" evidence="1">
    <location>
        <begin position="24"/>
        <end position="44"/>
    </location>
</feature>
<feature type="transmembrane region" description="Helical" evidence="1">
    <location>
        <begin position="82"/>
        <end position="102"/>
    </location>
</feature>
<feature type="transmembrane region" description="Helical" evidence="1">
    <location>
        <begin position="114"/>
        <end position="134"/>
    </location>
</feature>
<feature type="transmembrane region" description="Helical" evidence="1">
    <location>
        <begin position="156"/>
        <end position="176"/>
    </location>
</feature>
<feature type="transmembrane region" description="Helical" evidence="1">
    <location>
        <begin position="178"/>
        <end position="198"/>
    </location>
</feature>
<feature type="binding site" evidence="1">
    <location>
        <position position="45"/>
    </location>
    <ligand>
        <name>Zn(2+)</name>
        <dbReference type="ChEBI" id="CHEBI:29105"/>
    </ligand>
</feature>
<feature type="binding site" evidence="1">
    <location>
        <position position="49"/>
    </location>
    <ligand>
        <name>Zn(2+)</name>
        <dbReference type="ChEBI" id="CHEBI:29105"/>
    </ligand>
</feature>
<feature type="binding site" evidence="1">
    <location>
        <position position="153"/>
    </location>
    <ligand>
        <name>Zn(2+)</name>
        <dbReference type="ChEBI" id="CHEBI:29105"/>
    </ligand>
</feature>
<feature type="binding site" evidence="1">
    <location>
        <position position="157"/>
    </location>
    <ligand>
        <name>Zn(2+)</name>
        <dbReference type="ChEBI" id="CHEBI:29105"/>
    </ligand>
</feature>
<sequence>MNQSYGRLVSRAAIAATAMASALLLIKIFAWWYTGSVSILAALVDSLVDIAASLTNLLVVRYSLQPADEEHTFGHGKAESLAALAQSMFISGSALFLFLTGIQHLVRPEPLQAAGVGVVVTLIALFSTLALVTFQRWVVRKTQSQAVRADMLHYQSDVMMNGAILVALGLSWYGWHRADALFALGIGIYILYSALRMGYEAVQSLLDRALPDEERQDIITIVTAWPGIRGAHDLRTRQSGPTRFIQIHLEMEDNLPLVQAHVIADQVEQAILRRFPGSDVIIHQDPSSVVPAAQQGFFER</sequence>